<evidence type="ECO:0000269" key="1">
    <source>
    </source>
</evidence>
<evidence type="ECO:0000269" key="2">
    <source>
    </source>
</evidence>
<evidence type="ECO:0000269" key="3">
    <source>
    </source>
</evidence>
<evidence type="ECO:0000269" key="4">
    <source>
    </source>
</evidence>
<evidence type="ECO:0000269" key="5">
    <source>
    </source>
</evidence>
<evidence type="ECO:0000269" key="6">
    <source>
    </source>
</evidence>
<evidence type="ECO:0000305" key="7"/>
<evidence type="ECO:0007829" key="8">
    <source>
        <dbReference type="PDB" id="2ZJR"/>
    </source>
</evidence>
<evidence type="ECO:0007829" key="9">
    <source>
        <dbReference type="PDB" id="3DLL"/>
    </source>
</evidence>
<evidence type="ECO:0007829" key="10">
    <source>
        <dbReference type="PDB" id="4IO9"/>
    </source>
</evidence>
<evidence type="ECO:0007829" key="11">
    <source>
        <dbReference type="PDB" id="5DM6"/>
    </source>
</evidence>
<gene>
    <name type="primary">rplP</name>
    <name type="ordered locus">DR_0318</name>
</gene>
<sequence length="141" mass="16095">MLLPKRTKFRKQFRGRMTGDAKGGDYVAFGDYGLIAMEPAWIKSNQIEACRIVMSRHFRRGGKIYIRIFPDKPVTKKPAETRMGKGKGAVEYWVSVVKPGRVMFEVAGVTEEQAKEAFRLAGHKLPIQTKMVKREVYDEAQ</sequence>
<comment type="function">
    <text>Binds the 5S and 23S rRNAs and is also seen to make contacts with the A and P site tRNAs. Interacts with A site tRNA mimics, and is probably one of the key factors, along with a helix of the 23S rRNA, in positioning tRNA stems in the peptidyl-transferase center.</text>
</comment>
<comment type="subunit">
    <text evidence="1 2 3 4 5 6">Part of the 50S ribosomal subunit. Contacts the CTC protein (RL25).</text>
</comment>
<comment type="similarity">
    <text evidence="7">Belongs to the universal ribosomal protein uL16 family.</text>
</comment>
<comment type="sequence caution" evidence="7">
    <conflict type="erroneous initiation">
        <sequence resource="EMBL-CDS" id="AAF09899"/>
    </conflict>
</comment>
<reference key="1">
    <citation type="journal article" date="1999" name="Science">
        <title>Genome sequence of the radioresistant bacterium Deinococcus radiodurans R1.</title>
        <authorList>
            <person name="White O."/>
            <person name="Eisen J.A."/>
            <person name="Heidelberg J.F."/>
            <person name="Hickey E.K."/>
            <person name="Peterson J.D."/>
            <person name="Dodson R.J."/>
            <person name="Haft D.H."/>
            <person name="Gwinn M.L."/>
            <person name="Nelson W.C."/>
            <person name="Richardson D.L."/>
            <person name="Moffat K.S."/>
            <person name="Qin H."/>
            <person name="Jiang L."/>
            <person name="Pamphile W."/>
            <person name="Crosby M."/>
            <person name="Shen M."/>
            <person name="Vamathevan J.J."/>
            <person name="Lam P."/>
            <person name="McDonald L.A."/>
            <person name="Utterback T.R."/>
            <person name="Zalewski C."/>
            <person name="Makarova K.S."/>
            <person name="Aravind L."/>
            <person name="Daly M.J."/>
            <person name="Minton K.W."/>
            <person name="Fleischmann R.D."/>
            <person name="Ketchum K.A."/>
            <person name="Nelson K.E."/>
            <person name="Salzberg S.L."/>
            <person name="Smith H.O."/>
            <person name="Venter J.C."/>
            <person name="Fraser C.M."/>
        </authorList>
    </citation>
    <scope>NUCLEOTIDE SEQUENCE [LARGE SCALE GENOMIC DNA]</scope>
    <source>
        <strain>ATCC 13939 / DSM 20539 / JCM 16871 / CCUG 27074 / LMG 4051 / NBRC 15346 / NCIMB 9279 / VKM B-1422 / R1</strain>
    </source>
</reference>
<reference key="2">
    <citation type="journal article" date="2001" name="Cell">
        <title>High resolution structure of the large ribosomal subunit from a mesophilic eubacterium.</title>
        <authorList>
            <person name="Harms J."/>
            <person name="Schluenzen F."/>
            <person name="Zarivach R."/>
            <person name="Bashan A."/>
            <person name="Gat S."/>
            <person name="Agmon I."/>
            <person name="Bartels H."/>
            <person name="Franceschi F."/>
            <person name="Yonath A."/>
        </authorList>
    </citation>
    <scope>X-RAY CRYSTALLOGRAPHY (3.1 ANGSTROMS) OF THE 50S SUBUNIT</scope>
    <scope>PROTEIN SEQUENCE OF 1-6</scope>
    <source>
        <strain>ATCC 13939 / DSM 20539 / JCM 16871 / CCUG 27074 / LMG 4051 / NBRC 15346 / NCIMB 9279 / VKM B-1422 / R1</strain>
    </source>
</reference>
<reference key="3">
    <citation type="journal article" date="2001" name="Nature">
        <title>Structural basis for the interaction of antibiotics with the peptidyl transferase centre in eubacteria.</title>
        <authorList>
            <person name="Schluenzen F."/>
            <person name="Zarivach R."/>
            <person name="Harms J."/>
            <person name="Bashan A."/>
            <person name="Tocilj A."/>
            <person name="Albrecht R."/>
            <person name="Yonath A."/>
            <person name="Franceschi F."/>
        </authorList>
    </citation>
    <scope>X-RAY CRYSTALLOGRAPHY (3.1 ANGSTROMS) OF THE 50S SUBUNIT IN COMPLEX WITH FIVE ANTIBIOTICS</scope>
    <source>
        <strain>ATCC 13939 / DSM 20539 / JCM 16871 / CCUG 27074 / LMG 4051 / NBRC 15346 / NCIMB 9279 / VKM B-1422 / R1</strain>
    </source>
</reference>
<reference key="4">
    <citation type="journal article" date="2003" name="Mol. Cell">
        <title>Structural basis of the ribosomal machinery for peptide bond formation, translocation, and nascent chain progression.</title>
        <authorList>
            <person name="Bashan A."/>
            <person name="Agmon I."/>
            <person name="Zarivach R."/>
            <person name="Schluenzen F."/>
            <person name="Harms J."/>
            <person name="Berisio R."/>
            <person name="Bartels H."/>
            <person name="Franceschi F."/>
            <person name="Auerbach T."/>
            <person name="Hansen H.A."/>
            <person name="Kossoy E."/>
            <person name="Kessler M."/>
            <person name="Yonath A."/>
        </authorList>
    </citation>
    <scope>X-RAY CRYSTALLOGRAPHY (3.5 ANGSTROMS) OF THE 50S SUBUNIT IN COMPLEX WITH TRNA MIMICS</scope>
    <source>
        <strain>ATCC 13939 / DSM 20539 / JCM 16871 / CCUG 27074 / LMG 4051 / NBRC 15346 / NCIMB 9279 / VKM B-1422 / R1</strain>
    </source>
</reference>
<reference key="5">
    <citation type="journal article" date="2003" name="Structure">
        <title>Structural basis for the antibiotic activity of ketolides and azalides.</title>
        <authorList>
            <person name="Schluenzen F."/>
            <person name="Harms J.M."/>
            <person name="Franceschi F."/>
            <person name="Hansen H.A."/>
            <person name="Bartels H."/>
            <person name="Zarivach R."/>
            <person name="Yonath A."/>
        </authorList>
    </citation>
    <scope>X-RAY CRYSTALLOGRAPHY (3.3 ANGSTROMS) OF THE 50S SUBUNIT IN COMPLEX WITH MODIFIED MACROLIDE ANTIBIOTICS</scope>
    <source>
        <strain>ATCC 13939 / DSM 20539 / JCM 16871 / CCUG 27074 / LMG 4051 / NBRC 15346 / NCIMB 9279 / VKM B-1422 / R1</strain>
    </source>
</reference>
<reference key="6">
    <citation type="journal article" date="2003" name="Nat. Struct. Biol.">
        <title>Structural insight into the role of the ribosomal tunnel in cellular regulation.</title>
        <authorList>
            <person name="Berisio R."/>
            <person name="Schluenzen F."/>
            <person name="Harms J."/>
            <person name="Bashan A."/>
            <person name="Auerbach T."/>
            <person name="Baram D."/>
            <person name="Yonath A."/>
        </authorList>
    </citation>
    <scope>X-RAY CRYSTALLOGRAPHY (3.4 ANGSTROMS) OF THE 50S SUBUNIT IN COMPLEX WITH TROLEANDOMYCIN</scope>
    <source>
        <strain>ATCC 13939 / DSM 20539 / JCM 16871 / CCUG 27074 / LMG 4051 / NBRC 15346 / NCIMB 9279 / VKM B-1422 / R1</strain>
    </source>
</reference>
<reference key="7">
    <citation type="journal article" date="2004" name="BMC Biol.">
        <title>Alterations at the peptidyl transferase centre of the ribosome induced by the synergistic action of the streptogramins dalfopristin and quinupristin.</title>
        <authorList>
            <person name="Harms J.M."/>
            <person name="Schluenzen F."/>
            <person name="Fucini P."/>
            <person name="Bartels H."/>
            <person name="Yonath A."/>
        </authorList>
    </citation>
    <scope>X-RAY CRYSTALLOGRAPHY (3.4 ANGSTROMS) OF THE 50S SUBUNIT IN COMPLEX WITH THE STREPTOGRAMINS QUINUPRISTIN AND DALFOPRISTIN</scope>
    <source>
        <strain>ATCC 13939 / DSM 20539 / JCM 16871 / CCUG 27074 / LMG 4051 / NBRC 15346 / NCIMB 9279 / VKM B-1422 / R1</strain>
    </source>
</reference>
<reference key="8">
    <citation type="journal article" date="2004" name="Mol. Microbiol.">
        <title>Inhibition of peptide bond formation by pleuromutilins: the structure of the 50S ribosomal subunit from Deinococcus radiodurans in complex with tiamulin.</title>
        <authorList>
            <person name="Schluenzen F."/>
            <person name="Pyetan E."/>
            <person name="Fucini P."/>
            <person name="Yonath A."/>
            <person name="Harms J.M."/>
        </authorList>
    </citation>
    <scope>X-RAY CRYSTALLOGRAPHY (3.5 ANGSTROMS) OF THE 50S SUBUNIT IN COMPLEX WITH TIAMULIN</scope>
    <source>
        <strain>ATCC 13939 / DSM 20539 / JCM 16871 / CCUG 27074 / LMG 4051 / NBRC 15346 / NCIMB 9279 / VKM B-1422 / R1</strain>
    </source>
</reference>
<dbReference type="EMBL" id="AE000513">
    <property type="protein sequence ID" value="AAF09899.1"/>
    <property type="status" value="ALT_INIT"/>
    <property type="molecule type" value="Genomic_DNA"/>
</dbReference>
<dbReference type="PIR" id="F75534">
    <property type="entry name" value="F75534"/>
</dbReference>
<dbReference type="RefSeq" id="NP_294041.1">
    <property type="nucleotide sequence ID" value="NC_001263.1"/>
</dbReference>
<dbReference type="RefSeq" id="WP_025567820.1">
    <property type="nucleotide sequence ID" value="NZ_JMLF01000001.1"/>
</dbReference>
<dbReference type="PDB" id="1NJM">
    <property type="method" value="X-ray"/>
    <property type="resolution" value="3.60 A"/>
    <property type="chains" value="K=1-141"/>
</dbReference>
<dbReference type="PDB" id="1NJP">
    <property type="method" value="X-ray"/>
    <property type="resolution" value="3.50 A"/>
    <property type="chains" value="K=1-141"/>
</dbReference>
<dbReference type="PDB" id="1NKW">
    <property type="method" value="X-ray"/>
    <property type="resolution" value="3.10 A"/>
    <property type="chains" value="K=1-141"/>
</dbReference>
<dbReference type="PDB" id="1NWX">
    <property type="method" value="X-ray"/>
    <property type="resolution" value="3.50 A"/>
    <property type="chains" value="K=1-141"/>
</dbReference>
<dbReference type="PDB" id="1NWY">
    <property type="method" value="X-ray"/>
    <property type="resolution" value="3.30 A"/>
    <property type="chains" value="K=1-141"/>
</dbReference>
<dbReference type="PDB" id="1SM1">
    <property type="method" value="X-ray"/>
    <property type="resolution" value="3.42 A"/>
    <property type="chains" value="K=1-141"/>
</dbReference>
<dbReference type="PDB" id="1XBP">
    <property type="method" value="X-ray"/>
    <property type="resolution" value="3.50 A"/>
    <property type="chains" value="K=1-141"/>
</dbReference>
<dbReference type="PDB" id="1Y69">
    <property type="method" value="X-ray"/>
    <property type="resolution" value="3.33 A"/>
    <property type="chains" value="K=1-141"/>
</dbReference>
<dbReference type="PDB" id="2ZJP">
    <property type="method" value="X-ray"/>
    <property type="resolution" value="3.70 A"/>
    <property type="chains" value="J=1-141"/>
</dbReference>
<dbReference type="PDB" id="2ZJQ">
    <property type="method" value="X-ray"/>
    <property type="resolution" value="3.30 A"/>
    <property type="chains" value="J=1-141"/>
</dbReference>
<dbReference type="PDB" id="2ZJR">
    <property type="method" value="X-ray"/>
    <property type="resolution" value="2.91 A"/>
    <property type="chains" value="J=1-141"/>
</dbReference>
<dbReference type="PDB" id="3CF5">
    <property type="method" value="X-ray"/>
    <property type="resolution" value="3.30 A"/>
    <property type="chains" value="J=1-141"/>
</dbReference>
<dbReference type="PDB" id="3DLL">
    <property type="method" value="X-ray"/>
    <property type="resolution" value="3.50 A"/>
    <property type="chains" value="J=1-141"/>
</dbReference>
<dbReference type="PDB" id="3PIO">
    <property type="method" value="X-ray"/>
    <property type="resolution" value="3.25 A"/>
    <property type="chains" value="J=1-141"/>
</dbReference>
<dbReference type="PDB" id="3PIP">
    <property type="method" value="X-ray"/>
    <property type="resolution" value="3.45 A"/>
    <property type="chains" value="J=1-141"/>
</dbReference>
<dbReference type="PDB" id="4IO9">
    <property type="method" value="X-ray"/>
    <property type="resolution" value="3.20 A"/>
    <property type="chains" value="J=1-141"/>
</dbReference>
<dbReference type="PDB" id="4IOA">
    <property type="method" value="X-ray"/>
    <property type="resolution" value="3.20 A"/>
    <property type="chains" value="J=1-141"/>
</dbReference>
<dbReference type="PDB" id="4IOC">
    <property type="method" value="X-ray"/>
    <property type="resolution" value="3.60 A"/>
    <property type="chains" value="J=1-141"/>
</dbReference>
<dbReference type="PDB" id="4U67">
    <property type="method" value="X-ray"/>
    <property type="resolution" value="3.65 A"/>
    <property type="chains" value="J=1-141"/>
</dbReference>
<dbReference type="PDB" id="4V49">
    <property type="method" value="X-ray"/>
    <property type="resolution" value="8.70 A"/>
    <property type="chains" value="K=7-130"/>
</dbReference>
<dbReference type="PDB" id="4V4A">
    <property type="method" value="X-ray"/>
    <property type="resolution" value="9.50 A"/>
    <property type="chains" value="K=7-130"/>
</dbReference>
<dbReference type="PDB" id="4V4G">
    <property type="method" value="X-ray"/>
    <property type="resolution" value="11.50 A"/>
    <property type="chains" value="N=7-130"/>
</dbReference>
<dbReference type="PDB" id="4WFN">
    <property type="method" value="X-ray"/>
    <property type="resolution" value="3.54 A"/>
    <property type="chains" value="J=1-141"/>
</dbReference>
<dbReference type="PDB" id="5DM6">
    <property type="method" value="X-ray"/>
    <property type="resolution" value="2.90 A"/>
    <property type="chains" value="J=5-140"/>
</dbReference>
<dbReference type="PDB" id="5DM7">
    <property type="method" value="X-ray"/>
    <property type="resolution" value="3.00 A"/>
    <property type="chains" value="J=5-140"/>
</dbReference>
<dbReference type="PDB" id="5JVG">
    <property type="method" value="X-ray"/>
    <property type="resolution" value="3.43 A"/>
    <property type="chains" value="J=1-141"/>
</dbReference>
<dbReference type="PDB" id="5JVH">
    <property type="method" value="X-ray"/>
    <property type="resolution" value="3.58 A"/>
    <property type="chains" value="J=1-141"/>
</dbReference>
<dbReference type="PDB" id="7A0R">
    <property type="method" value="X-ray"/>
    <property type="resolution" value="3.30 A"/>
    <property type="chains" value="J=5-140"/>
</dbReference>
<dbReference type="PDB" id="7A0S">
    <property type="method" value="X-ray"/>
    <property type="resolution" value="3.22 A"/>
    <property type="chains" value="J=5-140"/>
</dbReference>
<dbReference type="PDB" id="7A18">
    <property type="method" value="X-ray"/>
    <property type="resolution" value="3.40 A"/>
    <property type="chains" value="J=5-138"/>
</dbReference>
<dbReference type="PDBsum" id="1NJM"/>
<dbReference type="PDBsum" id="1NJP"/>
<dbReference type="PDBsum" id="1NKW"/>
<dbReference type="PDBsum" id="1NWX"/>
<dbReference type="PDBsum" id="1NWY"/>
<dbReference type="PDBsum" id="1SM1"/>
<dbReference type="PDBsum" id="1XBP"/>
<dbReference type="PDBsum" id="1Y69"/>
<dbReference type="PDBsum" id="2ZJP"/>
<dbReference type="PDBsum" id="2ZJQ"/>
<dbReference type="PDBsum" id="2ZJR"/>
<dbReference type="PDBsum" id="3CF5"/>
<dbReference type="PDBsum" id="3DLL"/>
<dbReference type="PDBsum" id="3PIO"/>
<dbReference type="PDBsum" id="3PIP"/>
<dbReference type="PDBsum" id="4IO9"/>
<dbReference type="PDBsum" id="4IOA"/>
<dbReference type="PDBsum" id="4IOC"/>
<dbReference type="PDBsum" id="4U67"/>
<dbReference type="PDBsum" id="4V49"/>
<dbReference type="PDBsum" id="4V4A"/>
<dbReference type="PDBsum" id="4V4G"/>
<dbReference type="PDBsum" id="4WFN"/>
<dbReference type="PDBsum" id="5DM6"/>
<dbReference type="PDBsum" id="5DM7"/>
<dbReference type="PDBsum" id="5JVG"/>
<dbReference type="PDBsum" id="5JVH"/>
<dbReference type="PDBsum" id="7A0R"/>
<dbReference type="PDBsum" id="7A0S"/>
<dbReference type="PDBsum" id="7A18"/>
<dbReference type="SMR" id="Q9RXJ5"/>
<dbReference type="FunCoup" id="Q9RXJ5">
    <property type="interactions" value="414"/>
</dbReference>
<dbReference type="IntAct" id="Q9RXJ5">
    <property type="interactions" value="1"/>
</dbReference>
<dbReference type="STRING" id="243230.DR_0318"/>
<dbReference type="PaxDb" id="243230-DR_0318"/>
<dbReference type="EnsemblBacteria" id="AAF09899">
    <property type="protein sequence ID" value="AAF09899"/>
    <property type="gene ID" value="DR_0318"/>
</dbReference>
<dbReference type="GeneID" id="69516550"/>
<dbReference type="KEGG" id="dra:DR_0318"/>
<dbReference type="PATRIC" id="fig|243230.17.peg.484"/>
<dbReference type="eggNOG" id="COG0197">
    <property type="taxonomic scope" value="Bacteria"/>
</dbReference>
<dbReference type="HOGENOM" id="CLU_078858_2_1_0"/>
<dbReference type="InParanoid" id="Q9RXJ5"/>
<dbReference type="OrthoDB" id="9802589at2"/>
<dbReference type="EvolutionaryTrace" id="Q9RXJ5"/>
<dbReference type="Proteomes" id="UP000002524">
    <property type="component" value="Chromosome 1"/>
</dbReference>
<dbReference type="GO" id="GO:0022625">
    <property type="term" value="C:cytosolic large ribosomal subunit"/>
    <property type="evidence" value="ECO:0000318"/>
    <property type="project" value="GO_Central"/>
</dbReference>
<dbReference type="GO" id="GO:0019843">
    <property type="term" value="F:rRNA binding"/>
    <property type="evidence" value="ECO:0000318"/>
    <property type="project" value="GO_Central"/>
</dbReference>
<dbReference type="GO" id="GO:0003735">
    <property type="term" value="F:structural constituent of ribosome"/>
    <property type="evidence" value="ECO:0000318"/>
    <property type="project" value="GO_Central"/>
</dbReference>
<dbReference type="GO" id="GO:0000049">
    <property type="term" value="F:tRNA binding"/>
    <property type="evidence" value="ECO:0007669"/>
    <property type="project" value="UniProtKB-KW"/>
</dbReference>
<dbReference type="GO" id="GO:0006412">
    <property type="term" value="P:translation"/>
    <property type="evidence" value="ECO:0007669"/>
    <property type="project" value="UniProtKB-UniRule"/>
</dbReference>
<dbReference type="CDD" id="cd01433">
    <property type="entry name" value="Ribosomal_L16_L10e"/>
    <property type="match status" value="1"/>
</dbReference>
<dbReference type="FunFam" id="3.90.1170.10:FF:000001">
    <property type="entry name" value="50S ribosomal protein L16"/>
    <property type="match status" value="1"/>
</dbReference>
<dbReference type="Gene3D" id="3.90.1170.10">
    <property type="entry name" value="Ribosomal protein L10e/L16"/>
    <property type="match status" value="1"/>
</dbReference>
<dbReference type="HAMAP" id="MF_01342">
    <property type="entry name" value="Ribosomal_uL16"/>
    <property type="match status" value="1"/>
</dbReference>
<dbReference type="InterPro" id="IPR047873">
    <property type="entry name" value="Ribosomal_uL16"/>
</dbReference>
<dbReference type="InterPro" id="IPR000114">
    <property type="entry name" value="Ribosomal_uL16_bact-type"/>
</dbReference>
<dbReference type="InterPro" id="IPR020798">
    <property type="entry name" value="Ribosomal_uL16_CS"/>
</dbReference>
<dbReference type="InterPro" id="IPR016180">
    <property type="entry name" value="Ribosomal_uL16_dom"/>
</dbReference>
<dbReference type="InterPro" id="IPR036920">
    <property type="entry name" value="Ribosomal_uL16_sf"/>
</dbReference>
<dbReference type="NCBIfam" id="TIGR01164">
    <property type="entry name" value="rplP_bact"/>
    <property type="match status" value="1"/>
</dbReference>
<dbReference type="PANTHER" id="PTHR12220">
    <property type="entry name" value="50S/60S RIBOSOMAL PROTEIN L16"/>
    <property type="match status" value="1"/>
</dbReference>
<dbReference type="PANTHER" id="PTHR12220:SF13">
    <property type="entry name" value="LARGE RIBOSOMAL SUBUNIT PROTEIN UL16M"/>
    <property type="match status" value="1"/>
</dbReference>
<dbReference type="Pfam" id="PF00252">
    <property type="entry name" value="Ribosomal_L16"/>
    <property type="match status" value="1"/>
</dbReference>
<dbReference type="PRINTS" id="PR00060">
    <property type="entry name" value="RIBOSOMALL16"/>
</dbReference>
<dbReference type="SUPFAM" id="SSF54686">
    <property type="entry name" value="Ribosomal protein L16p/L10e"/>
    <property type="match status" value="1"/>
</dbReference>
<dbReference type="PROSITE" id="PS00586">
    <property type="entry name" value="RIBOSOMAL_L16_1"/>
    <property type="match status" value="1"/>
</dbReference>
<dbReference type="PROSITE" id="PS00701">
    <property type="entry name" value="RIBOSOMAL_L16_2"/>
    <property type="match status" value="1"/>
</dbReference>
<protein>
    <recommendedName>
        <fullName evidence="7">Large ribosomal subunit protein uL16</fullName>
    </recommendedName>
    <alternativeName>
        <fullName>50S ribosomal protein L16</fullName>
    </alternativeName>
</protein>
<organism>
    <name type="scientific">Deinococcus radiodurans (strain ATCC 13939 / DSM 20539 / JCM 16871 / CCUG 27074 / LMG 4051 / NBRC 15346 / NCIMB 9279 / VKM B-1422 / R1)</name>
    <dbReference type="NCBI Taxonomy" id="243230"/>
    <lineage>
        <taxon>Bacteria</taxon>
        <taxon>Thermotogati</taxon>
        <taxon>Deinococcota</taxon>
        <taxon>Deinococci</taxon>
        <taxon>Deinococcales</taxon>
        <taxon>Deinococcaceae</taxon>
        <taxon>Deinococcus</taxon>
    </lineage>
</organism>
<accession>Q9RXJ5</accession>
<proteinExistence type="evidence at protein level"/>
<name>RL16_DEIRA</name>
<feature type="initiator methionine" description="Removed">
    <location>
        <position position="1"/>
    </location>
</feature>
<feature type="chain" id="PRO_0000062093" description="Large ribosomal subunit protein uL16">
    <location>
        <begin position="2"/>
        <end position="141"/>
    </location>
</feature>
<feature type="strand" evidence="11">
    <location>
        <begin position="29"/>
        <end position="36"/>
    </location>
</feature>
<feature type="strand" evidence="10">
    <location>
        <begin position="40"/>
        <end position="43"/>
    </location>
</feature>
<feature type="helix" evidence="11">
    <location>
        <begin position="44"/>
        <end position="58"/>
    </location>
</feature>
<feature type="strand" evidence="11">
    <location>
        <begin position="63"/>
        <end position="66"/>
    </location>
</feature>
<feature type="strand" evidence="11">
    <location>
        <begin position="72"/>
        <end position="74"/>
    </location>
</feature>
<feature type="strand" evidence="8">
    <location>
        <begin position="78"/>
        <end position="80"/>
    </location>
</feature>
<feature type="strand" evidence="8">
    <location>
        <begin position="84"/>
        <end position="86"/>
    </location>
</feature>
<feature type="helix" evidence="9">
    <location>
        <begin position="89"/>
        <end position="91"/>
    </location>
</feature>
<feature type="strand" evidence="11">
    <location>
        <begin position="92"/>
        <end position="95"/>
    </location>
</feature>
<feature type="strand" evidence="11">
    <location>
        <begin position="102"/>
        <end position="109"/>
    </location>
</feature>
<feature type="helix" evidence="11">
    <location>
        <begin position="111"/>
        <end position="123"/>
    </location>
</feature>
<feature type="strand" evidence="11">
    <location>
        <begin position="125"/>
        <end position="127"/>
    </location>
</feature>
<feature type="strand" evidence="11">
    <location>
        <begin position="129"/>
        <end position="132"/>
    </location>
</feature>
<keyword id="KW-0002">3D-structure</keyword>
<keyword id="KW-0903">Direct protein sequencing</keyword>
<keyword id="KW-1185">Reference proteome</keyword>
<keyword id="KW-0687">Ribonucleoprotein</keyword>
<keyword id="KW-0689">Ribosomal protein</keyword>
<keyword id="KW-0694">RNA-binding</keyword>
<keyword id="KW-0699">rRNA-binding</keyword>
<keyword id="KW-0820">tRNA-binding</keyword>